<reference key="1">
    <citation type="journal article" date="2006" name="Nat. Biotechnol.">
        <title>Complete genome sequence of the entomopathogenic and metabolically versatile soil bacterium Pseudomonas entomophila.</title>
        <authorList>
            <person name="Vodovar N."/>
            <person name="Vallenet D."/>
            <person name="Cruveiller S."/>
            <person name="Rouy Z."/>
            <person name="Barbe V."/>
            <person name="Acosta C."/>
            <person name="Cattolico L."/>
            <person name="Jubin C."/>
            <person name="Lajus A."/>
            <person name="Segurens B."/>
            <person name="Vacherie B."/>
            <person name="Wincker P."/>
            <person name="Weissenbach J."/>
            <person name="Lemaitre B."/>
            <person name="Medigue C."/>
            <person name="Boccard F."/>
        </authorList>
    </citation>
    <scope>NUCLEOTIDE SEQUENCE [LARGE SCALE GENOMIC DNA]</scope>
    <source>
        <strain>L48</strain>
    </source>
</reference>
<keyword id="KW-0963">Cytoplasm</keyword>
<keyword id="KW-0396">Initiation factor</keyword>
<keyword id="KW-0648">Protein biosynthesis</keyword>
<name>IF3_PSEE4</name>
<feature type="chain" id="PRO_1000004559" description="Translation initiation factor IF-3">
    <location>
        <begin position="1"/>
        <end position="183"/>
    </location>
</feature>
<protein>
    <recommendedName>
        <fullName evidence="1">Translation initiation factor IF-3</fullName>
    </recommendedName>
</protein>
<gene>
    <name evidence="1" type="primary">infC</name>
    <name type="ordered locus">PSEEN1964</name>
</gene>
<sequence length="183" mass="20954">MTIKREMRNDKRTAPKAPINENISAREVRLIGADGEQIGIVSIDEALRIADEAKLDLVEISADAQPPVCKVMDYGKHLFEKKKQANEAKKNQKQIQIKEIKFRPGTEEGDYQVKLRNLVRFLSDGDKAKISLRFRGREMAHQELGMELLKRVETDLAEYGTVEQHPKMEGRQLMMVIAPKKKK</sequence>
<comment type="function">
    <text evidence="1">IF-3 binds to the 30S ribosomal subunit and shifts the equilibrium between 70S ribosomes and their 50S and 30S subunits in favor of the free subunits, thus enhancing the availability of 30S subunits on which protein synthesis initiation begins.</text>
</comment>
<comment type="subunit">
    <text evidence="1">Monomer.</text>
</comment>
<comment type="subcellular location">
    <subcellularLocation>
        <location evidence="1">Cytoplasm</location>
    </subcellularLocation>
</comment>
<comment type="similarity">
    <text evidence="1">Belongs to the IF-3 family.</text>
</comment>
<dbReference type="EMBL" id="CT573326">
    <property type="protein sequence ID" value="CAK14799.1"/>
    <property type="molecule type" value="Genomic_DNA"/>
</dbReference>
<dbReference type="SMR" id="Q1IC14"/>
<dbReference type="STRING" id="384676.PSEEN1964"/>
<dbReference type="KEGG" id="pen:PSEEN1964"/>
<dbReference type="eggNOG" id="COG0290">
    <property type="taxonomic scope" value="Bacteria"/>
</dbReference>
<dbReference type="HOGENOM" id="CLU_054919_3_2_6"/>
<dbReference type="Proteomes" id="UP000000658">
    <property type="component" value="Chromosome"/>
</dbReference>
<dbReference type="GO" id="GO:0005829">
    <property type="term" value="C:cytosol"/>
    <property type="evidence" value="ECO:0007669"/>
    <property type="project" value="TreeGrafter"/>
</dbReference>
<dbReference type="GO" id="GO:0016020">
    <property type="term" value="C:membrane"/>
    <property type="evidence" value="ECO:0007669"/>
    <property type="project" value="TreeGrafter"/>
</dbReference>
<dbReference type="GO" id="GO:0043022">
    <property type="term" value="F:ribosome binding"/>
    <property type="evidence" value="ECO:0007669"/>
    <property type="project" value="TreeGrafter"/>
</dbReference>
<dbReference type="GO" id="GO:0003743">
    <property type="term" value="F:translation initiation factor activity"/>
    <property type="evidence" value="ECO:0007669"/>
    <property type="project" value="UniProtKB-UniRule"/>
</dbReference>
<dbReference type="GO" id="GO:0032790">
    <property type="term" value="P:ribosome disassembly"/>
    <property type="evidence" value="ECO:0007669"/>
    <property type="project" value="TreeGrafter"/>
</dbReference>
<dbReference type="FunFam" id="3.10.20.80:FF:000001">
    <property type="entry name" value="Translation initiation factor IF-3"/>
    <property type="match status" value="1"/>
</dbReference>
<dbReference type="FunFam" id="3.30.110.10:FF:000001">
    <property type="entry name" value="Translation initiation factor IF-3"/>
    <property type="match status" value="1"/>
</dbReference>
<dbReference type="Gene3D" id="3.30.110.10">
    <property type="entry name" value="Translation initiation factor 3 (IF-3), C-terminal domain"/>
    <property type="match status" value="1"/>
</dbReference>
<dbReference type="Gene3D" id="3.10.20.80">
    <property type="entry name" value="Translation initiation factor 3 (IF-3), N-terminal domain"/>
    <property type="match status" value="1"/>
</dbReference>
<dbReference type="HAMAP" id="MF_00080">
    <property type="entry name" value="IF_3"/>
    <property type="match status" value="1"/>
</dbReference>
<dbReference type="InterPro" id="IPR036788">
    <property type="entry name" value="T_IF-3_C_sf"/>
</dbReference>
<dbReference type="InterPro" id="IPR036787">
    <property type="entry name" value="T_IF-3_N_sf"/>
</dbReference>
<dbReference type="InterPro" id="IPR001288">
    <property type="entry name" value="Translation_initiation_fac_3"/>
</dbReference>
<dbReference type="InterPro" id="IPR019815">
    <property type="entry name" value="Translation_initiation_fac_3_C"/>
</dbReference>
<dbReference type="InterPro" id="IPR019814">
    <property type="entry name" value="Translation_initiation_fac_3_N"/>
</dbReference>
<dbReference type="NCBIfam" id="TIGR00168">
    <property type="entry name" value="infC"/>
    <property type="match status" value="1"/>
</dbReference>
<dbReference type="PANTHER" id="PTHR10938">
    <property type="entry name" value="TRANSLATION INITIATION FACTOR IF-3"/>
    <property type="match status" value="1"/>
</dbReference>
<dbReference type="PANTHER" id="PTHR10938:SF0">
    <property type="entry name" value="TRANSLATION INITIATION FACTOR IF-3, MITOCHONDRIAL"/>
    <property type="match status" value="1"/>
</dbReference>
<dbReference type="Pfam" id="PF00707">
    <property type="entry name" value="IF3_C"/>
    <property type="match status" value="1"/>
</dbReference>
<dbReference type="Pfam" id="PF05198">
    <property type="entry name" value="IF3_N"/>
    <property type="match status" value="1"/>
</dbReference>
<dbReference type="SUPFAM" id="SSF55200">
    <property type="entry name" value="Translation initiation factor IF3, C-terminal domain"/>
    <property type="match status" value="1"/>
</dbReference>
<dbReference type="SUPFAM" id="SSF54364">
    <property type="entry name" value="Translation initiation factor IF3, N-terminal domain"/>
    <property type="match status" value="1"/>
</dbReference>
<accession>Q1IC14</accession>
<evidence type="ECO:0000255" key="1">
    <source>
        <dbReference type="HAMAP-Rule" id="MF_00080"/>
    </source>
</evidence>
<proteinExistence type="inferred from homology"/>
<organism>
    <name type="scientific">Pseudomonas entomophila (strain L48)</name>
    <dbReference type="NCBI Taxonomy" id="384676"/>
    <lineage>
        <taxon>Bacteria</taxon>
        <taxon>Pseudomonadati</taxon>
        <taxon>Pseudomonadota</taxon>
        <taxon>Gammaproteobacteria</taxon>
        <taxon>Pseudomonadales</taxon>
        <taxon>Pseudomonadaceae</taxon>
        <taxon>Pseudomonas</taxon>
    </lineage>
</organism>